<proteinExistence type="inferred from homology"/>
<evidence type="ECO:0000250" key="1"/>
<evidence type="ECO:0000255" key="2"/>
<evidence type="ECO:0000255" key="3">
    <source>
        <dbReference type="PROSITE-ProRule" id="PRU10074"/>
    </source>
</evidence>
<evidence type="ECO:0000305" key="4"/>
<comment type="function">
    <text evidence="1">Vacuolar carboxypeptidase involved in degradation of small peptides. Digests preferentially peptides containing an aliphatic or hydrophobic residue in P1' position, as well as methionine, leucine or phenylalanine in P1 position of ester substrate (By similarity).</text>
</comment>
<comment type="catalytic activity">
    <reaction evidence="3">
        <text>Release of a C-terminal amino acid with broad specificity.</text>
        <dbReference type="EC" id="3.4.16.5"/>
    </reaction>
</comment>
<comment type="subcellular location">
    <subcellularLocation>
        <location evidence="1">Vacuole</location>
    </subcellularLocation>
</comment>
<comment type="similarity">
    <text evidence="4">Belongs to the peptidase S10 family.</text>
</comment>
<organism>
    <name type="scientific">Aspergillus niger (strain ATCC MYA-4892 / CBS 513.88 / FGSC A1513)</name>
    <dbReference type="NCBI Taxonomy" id="425011"/>
    <lineage>
        <taxon>Eukaryota</taxon>
        <taxon>Fungi</taxon>
        <taxon>Dikarya</taxon>
        <taxon>Ascomycota</taxon>
        <taxon>Pezizomycotina</taxon>
        <taxon>Eurotiomycetes</taxon>
        <taxon>Eurotiomycetidae</taxon>
        <taxon>Eurotiales</taxon>
        <taxon>Aspergillaceae</taxon>
        <taxon>Aspergillus</taxon>
        <taxon>Aspergillus subgen. Circumdati</taxon>
    </lineage>
</organism>
<feature type="signal peptide" evidence="2">
    <location>
        <begin position="1"/>
        <end position="17"/>
    </location>
</feature>
<feature type="propeptide" id="PRO_0000407436" evidence="1">
    <location>
        <begin position="18"/>
        <end position="138"/>
    </location>
</feature>
<feature type="chain" id="PRO_5000242373" description="Carboxypeptidase Y homolog A">
    <location>
        <begin position="139"/>
        <end position="557"/>
    </location>
</feature>
<feature type="active site" evidence="3">
    <location>
        <position position="280"/>
    </location>
</feature>
<feature type="active site" evidence="3">
    <location>
        <position position="472"/>
    </location>
</feature>
<feature type="active site" evidence="3">
    <location>
        <position position="534"/>
    </location>
</feature>
<feature type="glycosylation site" description="N-linked (GlcNAc...) asparagine" evidence="2">
    <location>
        <position position="224"/>
    </location>
</feature>
<feature type="glycosylation site" description="N-linked (GlcNAc...) asparagine" evidence="2">
    <location>
        <position position="523"/>
    </location>
</feature>
<feature type="disulfide bond" evidence="1">
    <location>
        <begin position="193"/>
        <end position="433"/>
    </location>
</feature>
<feature type="disulfide bond" evidence="1">
    <location>
        <begin position="327"/>
        <end position="341"/>
    </location>
</feature>
<feature type="disulfide bond" evidence="1">
    <location>
        <begin position="351"/>
        <end position="374"/>
    </location>
</feature>
<feature type="disulfide bond" evidence="1">
    <location>
        <begin position="358"/>
        <end position="367"/>
    </location>
</feature>
<feature type="disulfide bond" evidence="1">
    <location>
        <begin position="396"/>
        <end position="403"/>
    </location>
</feature>
<accession>A5AB21</accession>
<protein>
    <recommendedName>
        <fullName>Carboxypeptidase Y homolog A</fullName>
        <ecNumber>3.4.16.5</ecNumber>
    </recommendedName>
</protein>
<dbReference type="EC" id="3.4.16.5"/>
<dbReference type="EMBL" id="AM270178">
    <property type="protein sequence ID" value="CAK96655.1"/>
    <property type="molecule type" value="Genomic_DNA"/>
</dbReference>
<dbReference type="RefSeq" id="XP_001392987.1">
    <property type="nucleotide sequence ID" value="XM_001392950.2"/>
</dbReference>
<dbReference type="SMR" id="A5AB21"/>
<dbReference type="ESTHER" id="aspnc-cbpya">
    <property type="family name" value="Carboxypeptidase_S10"/>
</dbReference>
<dbReference type="MEROPS" id="S10.001"/>
<dbReference type="GlyCosmos" id="A5AB21">
    <property type="glycosylation" value="2 sites, No reported glycans"/>
</dbReference>
<dbReference type="EnsemblFungi" id="CAK96655">
    <property type="protein sequence ID" value="CAK96655"/>
    <property type="gene ID" value="An08g08750"/>
</dbReference>
<dbReference type="GeneID" id="4983193"/>
<dbReference type="KEGG" id="ang:An08g08750"/>
<dbReference type="VEuPathDB" id="FungiDB:An08g08750"/>
<dbReference type="HOGENOM" id="CLU_008523_10_4_1"/>
<dbReference type="Proteomes" id="UP000006706">
    <property type="component" value="Chromosome 8R"/>
</dbReference>
<dbReference type="GO" id="GO:0000324">
    <property type="term" value="C:fungal-type vacuole"/>
    <property type="evidence" value="ECO:0007669"/>
    <property type="project" value="TreeGrafter"/>
</dbReference>
<dbReference type="GO" id="GO:0004185">
    <property type="term" value="F:serine-type carboxypeptidase activity"/>
    <property type="evidence" value="ECO:0007669"/>
    <property type="project" value="UniProtKB-EC"/>
</dbReference>
<dbReference type="GO" id="GO:0006508">
    <property type="term" value="P:proteolysis"/>
    <property type="evidence" value="ECO:0007669"/>
    <property type="project" value="UniProtKB-KW"/>
</dbReference>
<dbReference type="FunFam" id="1.10.287.410:FF:000001">
    <property type="entry name" value="Carboxypeptidase Y"/>
    <property type="match status" value="1"/>
</dbReference>
<dbReference type="Gene3D" id="1.10.287.410">
    <property type="match status" value="1"/>
</dbReference>
<dbReference type="Gene3D" id="3.40.50.1820">
    <property type="entry name" value="alpha/beta hydrolase"/>
    <property type="match status" value="1"/>
</dbReference>
<dbReference type="InterPro" id="IPR029058">
    <property type="entry name" value="AB_hydrolase_fold"/>
</dbReference>
<dbReference type="InterPro" id="IPR001563">
    <property type="entry name" value="Peptidase_S10"/>
</dbReference>
<dbReference type="InterPro" id="IPR008442">
    <property type="entry name" value="Propeptide_carboxypepY"/>
</dbReference>
<dbReference type="InterPro" id="IPR018202">
    <property type="entry name" value="Ser_caboxypep_ser_AS"/>
</dbReference>
<dbReference type="PANTHER" id="PTHR11802:SF113">
    <property type="entry name" value="SERINE CARBOXYPEPTIDASE CTSA-4.1"/>
    <property type="match status" value="1"/>
</dbReference>
<dbReference type="PANTHER" id="PTHR11802">
    <property type="entry name" value="SERINE PROTEASE FAMILY S10 SERINE CARBOXYPEPTIDASE"/>
    <property type="match status" value="1"/>
</dbReference>
<dbReference type="Pfam" id="PF05388">
    <property type="entry name" value="Carbpep_Y_N"/>
    <property type="match status" value="1"/>
</dbReference>
<dbReference type="Pfam" id="PF00450">
    <property type="entry name" value="Peptidase_S10"/>
    <property type="match status" value="1"/>
</dbReference>
<dbReference type="PRINTS" id="PR00724">
    <property type="entry name" value="CRBOXYPTASEC"/>
</dbReference>
<dbReference type="SUPFAM" id="SSF53474">
    <property type="entry name" value="alpha/beta-Hydrolases"/>
    <property type="match status" value="1"/>
</dbReference>
<dbReference type="PROSITE" id="PS00131">
    <property type="entry name" value="CARBOXYPEPT_SER_SER"/>
    <property type="match status" value="1"/>
</dbReference>
<reference key="1">
    <citation type="journal article" date="2007" name="Nat. Biotechnol.">
        <title>Genome sequencing and analysis of the versatile cell factory Aspergillus niger CBS 513.88.</title>
        <authorList>
            <person name="Pel H.J."/>
            <person name="de Winde J.H."/>
            <person name="Archer D.B."/>
            <person name="Dyer P.S."/>
            <person name="Hofmann G."/>
            <person name="Schaap P.J."/>
            <person name="Turner G."/>
            <person name="de Vries R.P."/>
            <person name="Albang R."/>
            <person name="Albermann K."/>
            <person name="Andersen M.R."/>
            <person name="Bendtsen J.D."/>
            <person name="Benen J.A.E."/>
            <person name="van den Berg M."/>
            <person name="Breestraat S."/>
            <person name="Caddick M.X."/>
            <person name="Contreras R."/>
            <person name="Cornell M."/>
            <person name="Coutinho P.M."/>
            <person name="Danchin E.G.J."/>
            <person name="Debets A.J.M."/>
            <person name="Dekker P."/>
            <person name="van Dijck P.W.M."/>
            <person name="van Dijk A."/>
            <person name="Dijkhuizen L."/>
            <person name="Driessen A.J.M."/>
            <person name="d'Enfert C."/>
            <person name="Geysens S."/>
            <person name="Goosen C."/>
            <person name="Groot G.S.P."/>
            <person name="de Groot P.W.J."/>
            <person name="Guillemette T."/>
            <person name="Henrissat B."/>
            <person name="Herweijer M."/>
            <person name="van den Hombergh J.P.T.W."/>
            <person name="van den Hondel C.A.M.J.J."/>
            <person name="van der Heijden R.T.J.M."/>
            <person name="van der Kaaij R.M."/>
            <person name="Klis F.M."/>
            <person name="Kools H.J."/>
            <person name="Kubicek C.P."/>
            <person name="van Kuyk P.A."/>
            <person name="Lauber J."/>
            <person name="Lu X."/>
            <person name="van der Maarel M.J.E.C."/>
            <person name="Meulenberg R."/>
            <person name="Menke H."/>
            <person name="Mortimer M.A."/>
            <person name="Nielsen J."/>
            <person name="Oliver S.G."/>
            <person name="Olsthoorn M."/>
            <person name="Pal K."/>
            <person name="van Peij N.N.M.E."/>
            <person name="Ram A.F.J."/>
            <person name="Rinas U."/>
            <person name="Roubos J.A."/>
            <person name="Sagt C.M.J."/>
            <person name="Schmoll M."/>
            <person name="Sun J."/>
            <person name="Ussery D."/>
            <person name="Varga J."/>
            <person name="Vervecken W."/>
            <person name="van de Vondervoort P.J.J."/>
            <person name="Wedler H."/>
            <person name="Woesten H.A.B."/>
            <person name="Zeng A.-P."/>
            <person name="van Ooyen A.J.J."/>
            <person name="Visser J."/>
            <person name="Stam H."/>
        </authorList>
    </citation>
    <scope>NUCLEOTIDE SEQUENCE [LARGE SCALE GENOMIC DNA]</scope>
    <source>
        <strain>ATCC MYA-4892 / CBS 513.88 / FGSC A1513</strain>
    </source>
</reference>
<keyword id="KW-0121">Carboxypeptidase</keyword>
<keyword id="KW-1015">Disulfide bond</keyword>
<keyword id="KW-0325">Glycoprotein</keyword>
<keyword id="KW-0378">Hydrolase</keyword>
<keyword id="KW-0645">Protease</keyword>
<keyword id="KW-1185">Reference proteome</keyword>
<keyword id="KW-0732">Signal</keyword>
<keyword id="KW-0926">Vacuole</keyword>
<keyword id="KW-0865">Zymogen</keyword>
<sequence>MRVLPAAMLVGAATAAVPPFQQVLGGNGAKHGADHAAEVPADHSADGFSKPLHAFQEELKSLSDEARKLWDEVASFFPESMDQNPLFSLPKKHNRRPDSHWDHIVRGSDVQSVWVTGENGEKEREVDGKLEAYDLRVKKTDPGSLGIDPGVKQYTGYLDDNENDKHLFYWFFESRNDPENDPVVLWLNGGPGCSSLTGLFMELGPSSINKKIQPVYNDYAWNSNASVIFLDQPVNVGYSYSNSAVSDTVAAGKDVYALLTLFFKQFPEYAKQDFHIAGESYAGHYIPVFASEILSHKKRNINLQSVLIGNGLTDGYTQYEYYRPMACGDGGYPAVLDESSCQSMDNALPRCQSMIESCYSSESAWVCVPASIYCNNALLAPYQRTGQNVYDVRGKCEDSSNLCYSAMGYVSDYLNKPEVIEAVGAEVNGYDSCNFDINRNFLFHGDWMKPYHRLVPGLLEQIPVLIYAGDADFICNWLGNKAWTEALEWPGQAEYASAELEDLVIVDNEHTGKKIGQVKSHGNFTFMRLYGGGHMVPMDQPESSLEFFNRWLGGEWF</sequence>
<gene>
    <name type="primary">cpyA</name>
    <name type="synonym">cpy</name>
    <name type="ORF">An08g08750</name>
</gene>
<name>CBPYA_ASPNC</name>